<accession>P09167</accession>
<sequence>MQKIKLTGLSLIISGLLMAQAQAAEPVYPDQLRLFSLGQGVCGDKYRPVNREEAQSVKSNIVGMMGQWQISGLANGWVIMGPGYNGEIKPGTASNTWCYPTNPVTGEIPTLSALDIPDGDEVDVQWRLVHDSANFIKPTSYLAHYLGYAWVGGNHSQYVGEDMDVTRDGDGWVIRGNNDGGCDGYRCGDKTAIKVSNFAYNLDPDSFKHGDVTQSDRQLVKTVVGWAVNDSDTPQSGYDVTLRYDTATNWSKTNTYGLSEKVTTKNKFKWPLVGETELSIEIAANQSWASQNGGSTTTSLSQSVRPTVPARSKIPVKIELYKADISYPYEFKADVSYDLTLSGFLRWGGNAWYTHPDNRPNWNHTFVIGPYKDKASSIRYQWDKRYIPGEVKWWDWNWTIQQNGLSTMQNNLARVLRPVRAGITGDFSAESQFAGNIEIGAPVPLAADSKVRRARSVDGAGQGLRLEIPLDAQELSGLGFNNVSLSVTPAANQ</sequence>
<dbReference type="EMBL" id="M16495">
    <property type="protein sequence ID" value="AAA21938.1"/>
    <property type="status" value="ALT_FRAME"/>
    <property type="molecule type" value="Genomic_DNA"/>
</dbReference>
<dbReference type="EMBL" id="M29818">
    <property type="protein sequence ID" value="AAA21934.1"/>
    <property type="molecule type" value="Genomic_DNA"/>
</dbReference>
<dbReference type="PIR" id="A25976">
    <property type="entry name" value="A25976"/>
</dbReference>
<dbReference type="PDB" id="1PRE">
    <property type="method" value="X-ray"/>
    <property type="resolution" value="2.80 A"/>
    <property type="chains" value="A/B=24-493"/>
</dbReference>
<dbReference type="PDB" id="1Z52">
    <property type="method" value="X-ray"/>
    <property type="resolution" value="2.38 A"/>
    <property type="chains" value="A/B=24-493"/>
</dbReference>
<dbReference type="PDB" id="3C0M">
    <property type="method" value="X-ray"/>
    <property type="resolution" value="2.88 A"/>
    <property type="chains" value="A/B=24-493"/>
</dbReference>
<dbReference type="PDB" id="3C0N">
    <property type="method" value="X-ray"/>
    <property type="resolution" value="2.20 A"/>
    <property type="chains" value="A/B=24-493"/>
</dbReference>
<dbReference type="PDB" id="3C0O">
    <property type="method" value="X-ray"/>
    <property type="resolution" value="2.50 A"/>
    <property type="chains" value="A/B=24-493"/>
</dbReference>
<dbReference type="PDB" id="3G4N">
    <property type="method" value="X-ray"/>
    <property type="resolution" value="2.10 A"/>
    <property type="chains" value="A/B=24-493"/>
</dbReference>
<dbReference type="PDB" id="3G4O">
    <property type="method" value="X-ray"/>
    <property type="resolution" value="2.30 A"/>
    <property type="chains" value="A/B=24-493"/>
</dbReference>
<dbReference type="PDB" id="5JZH">
    <property type="method" value="EM"/>
    <property type="resolution" value="3.90 A"/>
    <property type="chains" value="A/B/C/D/E/F/G/H/I/J/K/L/M/N=24-447"/>
</dbReference>
<dbReference type="PDB" id="5JZT">
    <property type="method" value="EM"/>
    <property type="resolution" value="7.40 A"/>
    <property type="chains" value="A/B/C/D/E/F/G=24-447"/>
</dbReference>
<dbReference type="PDB" id="5JZW">
    <property type="method" value="EM"/>
    <property type="resolution" value="4.46 A"/>
    <property type="chains" value="A/B/C/D/E/F/G/H/I/J/K/L/M/N=24-447"/>
</dbReference>
<dbReference type="PDB" id="9FM6">
    <property type="method" value="EM"/>
    <property type="resolution" value="2.20 A"/>
    <property type="chains" value="A/B/C/D/E/F/G=24-447"/>
</dbReference>
<dbReference type="PDB" id="9FML">
    <property type="method" value="EM"/>
    <property type="resolution" value="2.20 A"/>
    <property type="chains" value="A/B/C/D/E/F/G=24-493"/>
</dbReference>
<dbReference type="PDB" id="9FMX">
    <property type="method" value="EM"/>
    <property type="resolution" value="2.20 A"/>
    <property type="chains" value="A/B/C/D/E/F/G/H/I/J/K/L/M/N=24-493"/>
</dbReference>
<dbReference type="PDB" id="9FNP">
    <property type="method" value="EM"/>
    <property type="resolution" value="2.20 A"/>
    <property type="chains" value="A/B/C/D/E/F/G=24-447"/>
</dbReference>
<dbReference type="PDB" id="9FNQ">
    <property type="method" value="EM"/>
    <property type="resolution" value="2.10 A"/>
    <property type="chains" value="A/B/C/D/E/F/G=24-447"/>
</dbReference>
<dbReference type="PDBsum" id="1PRE"/>
<dbReference type="PDBsum" id="1Z52"/>
<dbReference type="PDBsum" id="3C0M"/>
<dbReference type="PDBsum" id="3C0N"/>
<dbReference type="PDBsum" id="3C0O"/>
<dbReference type="PDBsum" id="3G4N"/>
<dbReference type="PDBsum" id="3G4O"/>
<dbReference type="PDBsum" id="5JZH"/>
<dbReference type="PDBsum" id="5JZT"/>
<dbReference type="PDBsum" id="5JZW"/>
<dbReference type="PDBsum" id="9FM6"/>
<dbReference type="PDBsum" id="9FML"/>
<dbReference type="PDBsum" id="9FMX"/>
<dbReference type="PDBsum" id="9FNP"/>
<dbReference type="PDBsum" id="9FNQ"/>
<dbReference type="EMDB" id="EMD-50549"/>
<dbReference type="EMDB" id="EMD-50562"/>
<dbReference type="EMDB" id="EMD-50576"/>
<dbReference type="EMDB" id="EMD-50578"/>
<dbReference type="EMDB" id="EMD-50601"/>
<dbReference type="EMDB" id="EMD-50602"/>
<dbReference type="EMDB" id="EMD-8185"/>
<dbReference type="EMDB" id="EMD-8187"/>
<dbReference type="EMDB" id="EMD-8188"/>
<dbReference type="SMR" id="P09167"/>
<dbReference type="DIP" id="DIP-42724N"/>
<dbReference type="IntAct" id="P09167">
    <property type="interactions" value="2"/>
</dbReference>
<dbReference type="MINT" id="P09167"/>
<dbReference type="TCDB" id="1.C.4.1.1">
    <property type="family name" value="the aerolysin channel-forming toxin (aerolysin) family"/>
</dbReference>
<dbReference type="EvolutionaryTrace" id="P09167"/>
<dbReference type="GO" id="GO:0005576">
    <property type="term" value="C:extracellular region"/>
    <property type="evidence" value="ECO:0007669"/>
    <property type="project" value="UniProtKB-SubCell"/>
</dbReference>
<dbReference type="GO" id="GO:0020002">
    <property type="term" value="C:host cell plasma membrane"/>
    <property type="evidence" value="ECO:0007669"/>
    <property type="project" value="UniProtKB-SubCell"/>
</dbReference>
<dbReference type="GO" id="GO:0016020">
    <property type="term" value="C:membrane"/>
    <property type="evidence" value="ECO:0007669"/>
    <property type="project" value="UniProtKB-KW"/>
</dbReference>
<dbReference type="GO" id="GO:0042802">
    <property type="term" value="F:identical protein binding"/>
    <property type="evidence" value="ECO:0000353"/>
    <property type="project" value="IntAct"/>
</dbReference>
<dbReference type="GO" id="GO:0090729">
    <property type="term" value="F:toxin activity"/>
    <property type="evidence" value="ECO:0007669"/>
    <property type="project" value="UniProtKB-KW"/>
</dbReference>
<dbReference type="GO" id="GO:0001897">
    <property type="term" value="P:symbiont-mediated cytolysis of host cell"/>
    <property type="evidence" value="ECO:0000269"/>
    <property type="project" value="SigSci"/>
</dbReference>
<dbReference type="CDD" id="cd20218">
    <property type="entry name" value="PFM_aerolysin"/>
    <property type="match status" value="1"/>
</dbReference>
<dbReference type="Gene3D" id="3.10.40.10">
    <property type="entry name" value="Aerolysin/Pertussis toxin (APT), N-terminal domain"/>
    <property type="match status" value="1"/>
</dbReference>
<dbReference type="Gene3D" id="3.30.412.10">
    <property type="entry name" value="Proaerolysin, chain A, domain 2"/>
    <property type="match status" value="1"/>
</dbReference>
<dbReference type="Gene3D" id="2.170.15.10">
    <property type="entry name" value="Proaerolysin, chain A, domain 3"/>
    <property type="match status" value="1"/>
</dbReference>
<dbReference type="InterPro" id="IPR055267">
    <property type="entry name" value="Aerolysin-like_C"/>
</dbReference>
<dbReference type="InterPro" id="IPR005831">
    <property type="entry name" value="Aerolysin/haemolysin_CS"/>
</dbReference>
<dbReference type="InterPro" id="IPR005830">
    <property type="entry name" value="Aerolysn"/>
</dbReference>
<dbReference type="InterPro" id="IPR005138">
    <property type="entry name" value="APT_dom"/>
</dbReference>
<dbReference type="InterPro" id="IPR037015">
    <property type="entry name" value="APT_N_sf"/>
</dbReference>
<dbReference type="InterPro" id="IPR016187">
    <property type="entry name" value="CTDL_fold"/>
</dbReference>
<dbReference type="Pfam" id="PF01117">
    <property type="entry name" value="Aerolysin"/>
    <property type="match status" value="1"/>
</dbReference>
<dbReference type="Pfam" id="PF03440">
    <property type="entry name" value="APT"/>
    <property type="match status" value="1"/>
</dbReference>
<dbReference type="PRINTS" id="PR00754">
    <property type="entry name" value="AEROLYSIN"/>
</dbReference>
<dbReference type="SMART" id="SM00999">
    <property type="entry name" value="Aerolysin"/>
    <property type="match status" value="1"/>
</dbReference>
<dbReference type="SUPFAM" id="SSF56973">
    <property type="entry name" value="Aerolisin/ETX pore-forming domain"/>
    <property type="match status" value="1"/>
</dbReference>
<dbReference type="SUPFAM" id="SSF56436">
    <property type="entry name" value="C-type lectin-like"/>
    <property type="match status" value="1"/>
</dbReference>
<dbReference type="PROSITE" id="PS00274">
    <property type="entry name" value="AEROLYSIN"/>
    <property type="match status" value="1"/>
</dbReference>
<reference key="1">
    <citation type="journal article" date="1987" name="J. Bacteriol.">
        <title>Nucleotide sequence of the gene for the hole-forming toxin aerolysin of Aeromonas hydrophila.</title>
        <authorList>
            <person name="Howard S.P."/>
            <person name="Garland W.J."/>
            <person name="Green M.J."/>
            <person name="Buckley J.T."/>
        </authorList>
    </citation>
    <scope>NUCLEOTIDE SEQUENCE [GENOMIC DNA]</scope>
    <scope>PARTIAL PROTEIN SEQUENCE</scope>
</reference>
<reference key="2">
    <citation type="journal article" date="1986" name="Mol. Gen. Genet.">
        <title>Molecular cloning and expression in Escherichia coli of the structural gene for the hemolytic toxin aerolysin from Aeromonas hydrophila.</title>
        <authorList>
            <person name="Howard S.P."/>
            <person name="Buckley J.T."/>
        </authorList>
    </citation>
    <scope>NUCLEOTIDE SEQUENCE [GENOMIC DNA] OF 1-50</scope>
</reference>
<reference key="3">
    <citation type="journal article" date="1992" name="Biochemistry">
        <title>Spectroscopic study of the activation and oligomerization of the channel-forming toxin aerolysin: identification of the site of proteolytic activation.</title>
        <authorList>
            <person name="van der Goot F.G."/>
            <person name="Lakey J."/>
            <person name="Pattus F."/>
            <person name="Kay C.M."/>
            <person name="Sorokine O."/>
            <person name="van Dorsselaer A."/>
            <person name="Buckley J.T."/>
        </authorList>
    </citation>
    <scope>SEQUENCE REVISION</scope>
</reference>
<reference key="4">
    <citation type="journal article" date="1995" name="Biochemistry">
        <title>Protonation of histidine-132 promotes oligomerization of the channel-forming toxin aerolysin.</title>
        <authorList>
            <person name="Buckley J.T."/>
            <person name="Wilmsen H.U."/>
            <person name="Lesieur C."/>
            <person name="Schulze A."/>
            <person name="Pattus F."/>
            <person name="Parker M.W."/>
            <person name="van der Goot F.G."/>
        </authorList>
    </citation>
    <scope>IMPORTANCE OF HIS-155 FOR OLIGOMERIZATION</scope>
</reference>
<reference key="5">
    <citation type="journal article" date="1998" name="J. Biol. Chem.">
        <title>Glycosylphosphatidylinositol anchors of membrane glycoproteins are binding determinants for the channel-forming toxin aerolysin.</title>
        <authorList>
            <person name="Diep D.B."/>
            <person name="Nelson K.L."/>
            <person name="Raja S.M."/>
            <person name="Pleshak E.N."/>
            <person name="Buckley J.T."/>
        </authorList>
    </citation>
    <scope>FUNCTION</scope>
    <scope>SUBUNIT</scope>
</reference>
<reference key="6">
    <citation type="journal article" date="1999" name="J. Biol. Chem.">
        <title>Analysis of receptor binding by the channel-forming toxin aerolysin using surface plasmon resonance.</title>
        <authorList>
            <person name="MacKenzie C.R."/>
            <person name="Hirama T."/>
            <person name="Buckley J.T."/>
        </authorList>
    </citation>
    <scope>FUNCTION</scope>
    <scope>SUBUNIT</scope>
</reference>
<reference key="7">
    <citation type="journal article" date="2002" name="Nat. Struct. Biol.">
        <title>Conversion of a transmembrane to a water-soluble protein complex by a single point mutation.</title>
        <authorList>
            <person name="Tsitrin Y."/>
            <person name="Morton C.J."/>
            <person name="el-Bez C."/>
            <person name="Paumard P."/>
            <person name="Velluz M.C."/>
            <person name="Adrian M."/>
            <person name="Dubochet J."/>
            <person name="Parker M.W."/>
            <person name="Lanzavecchia S."/>
            <person name="van der Goot F.G."/>
        </authorList>
    </citation>
    <scope>MUTAGENESIS OF TYR-244</scope>
</reference>
<reference key="8">
    <citation type="journal article" date="2006" name="EMBO J.">
        <title>A rivet model for channel formation by aerolysin-like pore-forming toxins.</title>
        <authorList>
            <person name="Iacovache I."/>
            <person name="Paumard P."/>
            <person name="Scheib H."/>
            <person name="Lesieur C."/>
            <person name="Sakai N."/>
            <person name="Matile S."/>
            <person name="Parker M.W."/>
            <person name="van der Goot F.G."/>
        </authorList>
    </citation>
    <scope>FUNCTION</scope>
    <scope>SUBCELLULAR LOCATION</scope>
    <scope>SUBUNIT</scope>
    <scope>TOPOLOGY</scope>
</reference>
<reference key="9">
    <citation type="journal article" date="1994" name="Nature">
        <title>Structure of the Aeromonas toxin proaerolysin in its water-soluble and membrane-channel states.</title>
        <authorList>
            <person name="Parker M.W."/>
            <person name="Buckley J.T."/>
            <person name="Postma J.P."/>
            <person name="Tucker A.D."/>
            <person name="Leonard K."/>
            <person name="Pattus F."/>
            <person name="Tsernoglou D."/>
        </authorList>
    </citation>
    <scope>X-RAY CRYSTALLOGRAPHY (2.8 ANGSTROMS)</scope>
</reference>
<reference key="10">
    <citation type="journal article" date="2011" name="PLoS Pathog.">
        <title>Dual chaperone role of the C-terminal propeptide in folding and oligomerization of the pore-forming toxin aerolysin.</title>
        <authorList>
            <person name="Iacovache I."/>
            <person name="Degiacomi M.T."/>
            <person name="Pernot L."/>
            <person name="Ho S."/>
            <person name="Schiltz M."/>
            <person name="Dal Peraro M."/>
            <person name="van der Goot F.G."/>
        </authorList>
    </citation>
    <scope>X-RAY CRYSTALLOGRAPHY (2.10 ANGSTROMS) OF 24-493</scope>
    <scope>PROPEPTIDE</scope>
    <scope>DOMAIN</scope>
    <scope>SUBCELLULAR LOCATION</scope>
    <scope>FUNCTION</scope>
    <scope>DISULFIDE BOND</scope>
</reference>
<reference key="11">
    <citation type="journal article" date="2013" name="Nat. Chem. Biol.">
        <title>Molecular assembly of the aerolysin pore reveals a swirling membrane-insertion mechanism.</title>
        <authorList>
            <person name="Degiacomi M.T."/>
            <person name="Iacovache I."/>
            <person name="Pernot L."/>
            <person name="Chami M."/>
            <person name="Kudryashev M."/>
            <person name="Stahlberg H."/>
            <person name="van der Goot F.G."/>
            <person name="Dal Peraro M."/>
        </authorList>
    </citation>
    <scope>X-RAY CRYSTALLOGRAPHY (2.20 ANGSTROMS) OF 24-493 OF WILD-TYPE AND MUTANT GLY-244 IN COMPLEX WITH MANNOSE-6-PHOSPHATE</scope>
    <scope>DISULFIDE BOND</scope>
    <scope>SUBCELLULAR LOCATION</scope>
    <scope>SUBUNIT</scope>
    <scope>ELECTRON MICROSCOPY</scope>
    <scope>FUNCTION</scope>
    <scope>MUTAGENESIS OF LYS-208; ASP-211; LYS-221; ARG-305; LYS-313; GLU-330; LYS-332; LYS-374 AND GLU-390</scope>
    <scope>TOPOLOGY</scope>
</reference>
<feature type="signal peptide">
    <location>
        <begin position="1"/>
        <end position="23"/>
    </location>
</feature>
<feature type="chain" id="PRO_0000035620" description="Aerolysin">
    <location>
        <begin position="24"/>
        <end position="445"/>
    </location>
</feature>
<feature type="propeptide" id="PRO_0000035621">
    <location>
        <begin position="446"/>
        <end position="493"/>
    </location>
</feature>
<feature type="region of interest" description="Interaction with host N-linked glycan">
    <location>
        <begin position="68"/>
        <end position="84"/>
    </location>
</feature>
<feature type="region of interest" description="Part of the transmembrane beta-barrel after proteolytic activation of the toxin and insertion into the host membrane">
    <location>
        <begin position="256"/>
        <end position="288"/>
    </location>
</feature>
<feature type="region of interest" description="Interaction with glycans from host GPI-anchor">
    <location>
        <begin position="346"/>
        <end position="355"/>
    </location>
</feature>
<feature type="site" description="Important for oligomerization">
    <location>
        <position position="155"/>
    </location>
</feature>
<feature type="site" description="Important for heptamerization">
    <location>
        <position position="374"/>
    </location>
</feature>
<feature type="site" description="Important for heptamerization">
    <location>
        <position position="390"/>
    </location>
</feature>
<feature type="disulfide bond">
    <location>
        <begin position="42"/>
        <end position="98"/>
    </location>
</feature>
<feature type="disulfide bond">
    <location>
        <begin position="182"/>
        <end position="187"/>
    </location>
</feature>
<feature type="mutagenesis site" description="No effect on heptamerization." evidence="5">
    <original>K</original>
    <variation>A</variation>
    <location>
        <position position="208"/>
    </location>
</feature>
<feature type="mutagenesis site" description="No effect on heptamerization." evidence="5">
    <original>D</original>
    <variation>A</variation>
    <location>
        <position position="211"/>
    </location>
</feature>
<feature type="mutagenesis site" description="Impairs heptamerization." evidence="5">
    <original>K</original>
    <variation>A</variation>
    <location>
        <position position="221"/>
    </location>
</feature>
<feature type="mutagenesis site" description="Blocks the hemolytic activity. Does not affect the initial structure, the ability to bind to cell-surface receptors or the capacity to form heptamers. Does not insert into membranes and form pores; the mutant heptamer is hydrophilic instead of being hydrophobic." evidence="2">
    <original>Y</original>
    <variation>G</variation>
    <location>
        <position position="244"/>
    </location>
</feature>
<feature type="mutagenesis site" description="Impairs heptamerization." evidence="5">
    <original>R</original>
    <variation>A</variation>
    <location>
        <position position="305"/>
    </location>
</feature>
<feature type="mutagenesis site" description="No effect on heptamerization." evidence="5">
    <original>K</original>
    <variation>A</variation>
    <location>
        <position position="313"/>
    </location>
</feature>
<feature type="mutagenesis site" description="No effect on heptamerization." evidence="5">
    <original>E</original>
    <variation>A</variation>
    <location>
        <position position="330"/>
    </location>
</feature>
<feature type="mutagenesis site" description="No effect on heptamerization." evidence="5">
    <original>K</original>
    <variation>A</variation>
    <location>
        <position position="332"/>
    </location>
</feature>
<feature type="mutagenesis site" description="Impairs heptamerization." evidence="5">
    <original>K</original>
    <variation>A</variation>
    <location>
        <position position="374"/>
    </location>
</feature>
<feature type="mutagenesis site" description="Nearly abolishes heptamerization." evidence="5">
    <original>E</original>
    <variation>A</variation>
    <location>
        <position position="390"/>
    </location>
</feature>
<feature type="sequence conflict" description="In Ref. 1; AAA21938." evidence="7" ref="1">
    <original>E</original>
    <variation>Q</variation>
    <location>
        <position position="277"/>
    </location>
</feature>
<feature type="sequence conflict" description="In Ref. 1; AAA21938." evidence="7" ref="1">
    <original>A</original>
    <variation>R</variation>
    <location>
        <position position="283"/>
    </location>
</feature>
<feature type="sequence conflict" description="In Ref. 1; AAA21938." evidence="7" ref="1">
    <original>A</original>
    <variation>R</variation>
    <location>
        <position position="472"/>
    </location>
</feature>
<feature type="helix" evidence="10">
    <location>
        <begin position="29"/>
        <end position="31"/>
    </location>
</feature>
<feature type="strand" evidence="10">
    <location>
        <begin position="33"/>
        <end position="35"/>
    </location>
</feature>
<feature type="strand" evidence="10">
    <location>
        <begin position="46"/>
        <end position="48"/>
    </location>
</feature>
<feature type="helix" evidence="10">
    <location>
        <begin position="51"/>
        <end position="56"/>
    </location>
</feature>
<feature type="helix" evidence="10">
    <location>
        <begin position="58"/>
        <end position="62"/>
    </location>
</feature>
<feature type="strand" evidence="10">
    <location>
        <begin position="70"/>
        <end position="72"/>
    </location>
</feature>
<feature type="turn" evidence="9">
    <location>
        <begin position="74"/>
        <end position="76"/>
    </location>
</feature>
<feature type="strand" evidence="10">
    <location>
        <begin position="77"/>
        <end position="80"/>
    </location>
</feature>
<feature type="helix" evidence="10">
    <location>
        <begin position="82"/>
        <end position="84"/>
    </location>
</feature>
<feature type="strand" evidence="10">
    <location>
        <begin position="88"/>
        <end position="90"/>
    </location>
</feature>
<feature type="strand" evidence="10">
    <location>
        <begin position="94"/>
        <end position="102"/>
    </location>
</feature>
<feature type="strand" evidence="10">
    <location>
        <begin position="114"/>
        <end position="116"/>
    </location>
</feature>
<feature type="helix" evidence="10">
    <location>
        <begin position="121"/>
        <end position="129"/>
    </location>
</feature>
<feature type="turn" evidence="10">
    <location>
        <begin position="132"/>
        <end position="135"/>
    </location>
</feature>
<feature type="helix" evidence="10">
    <location>
        <begin position="136"/>
        <end position="145"/>
    </location>
</feature>
<feature type="strand" evidence="10">
    <location>
        <begin position="162"/>
        <end position="168"/>
    </location>
</feature>
<feature type="strand" evidence="10">
    <location>
        <begin position="171"/>
        <end position="176"/>
    </location>
</feature>
<feature type="turn" evidence="10">
    <location>
        <begin position="185"/>
        <end position="188"/>
    </location>
</feature>
<feature type="strand" evidence="10">
    <location>
        <begin position="192"/>
        <end position="202"/>
    </location>
</feature>
<feature type="helix" evidence="10">
    <location>
        <begin position="204"/>
        <end position="206"/>
    </location>
</feature>
<feature type="strand" evidence="10">
    <location>
        <begin position="213"/>
        <end position="229"/>
    </location>
</feature>
<feature type="strand" evidence="10">
    <location>
        <begin position="231"/>
        <end position="233"/>
    </location>
</feature>
<feature type="strand" evidence="10">
    <location>
        <begin position="237"/>
        <end position="252"/>
    </location>
</feature>
<feature type="helix" evidence="10">
    <location>
        <begin position="257"/>
        <end position="260"/>
    </location>
</feature>
<feature type="strand" evidence="10">
    <location>
        <begin position="274"/>
        <end position="276"/>
    </location>
</feature>
<feature type="strand" evidence="11">
    <location>
        <begin position="284"/>
        <end position="286"/>
    </location>
</feature>
<feature type="helix" evidence="10">
    <location>
        <begin position="288"/>
        <end position="290"/>
    </location>
</feature>
<feature type="strand" evidence="10">
    <location>
        <begin position="293"/>
        <end position="304"/>
    </location>
</feature>
<feature type="strand" evidence="10">
    <location>
        <begin position="312"/>
        <end position="345"/>
    </location>
</feature>
<feature type="strand" evidence="8">
    <location>
        <begin position="352"/>
        <end position="354"/>
    </location>
</feature>
<feature type="strand" evidence="10">
    <location>
        <begin position="361"/>
        <end position="370"/>
    </location>
</feature>
<feature type="helix" evidence="10">
    <location>
        <begin position="374"/>
        <end position="376"/>
    </location>
</feature>
<feature type="helix" evidence="10">
    <location>
        <begin position="378"/>
        <end position="384"/>
    </location>
</feature>
<feature type="helix" evidence="10">
    <location>
        <begin position="388"/>
        <end position="390"/>
    </location>
</feature>
<feature type="strand" evidence="10">
    <location>
        <begin position="392"/>
        <end position="394"/>
    </location>
</feature>
<feature type="helix" evidence="10">
    <location>
        <begin position="396"/>
        <end position="403"/>
    </location>
</feature>
<feature type="helix" evidence="10">
    <location>
        <begin position="405"/>
        <end position="415"/>
    </location>
</feature>
<feature type="strand" evidence="10">
    <location>
        <begin position="419"/>
        <end position="434"/>
    </location>
</feature>
<feature type="strand" evidence="10">
    <location>
        <begin position="465"/>
        <end position="467"/>
    </location>
</feature>
<feature type="helix" evidence="10">
    <location>
        <begin position="472"/>
        <end position="477"/>
    </location>
</feature>
<feature type="strand" evidence="10">
    <location>
        <begin position="481"/>
        <end position="489"/>
    </location>
</feature>
<gene>
    <name type="primary">aerA</name>
</gene>
<evidence type="ECO:0000269" key="1">
    <source>
    </source>
</evidence>
<evidence type="ECO:0000269" key="2">
    <source>
    </source>
</evidence>
<evidence type="ECO:0000269" key="3">
    <source>
    </source>
</evidence>
<evidence type="ECO:0000269" key="4">
    <source>
    </source>
</evidence>
<evidence type="ECO:0000269" key="5">
    <source>
    </source>
</evidence>
<evidence type="ECO:0000269" key="6">
    <source>
    </source>
</evidence>
<evidence type="ECO:0000305" key="7"/>
<evidence type="ECO:0007829" key="8">
    <source>
        <dbReference type="PDB" id="3C0M"/>
    </source>
</evidence>
<evidence type="ECO:0007829" key="9">
    <source>
        <dbReference type="PDB" id="3C0N"/>
    </source>
</evidence>
<evidence type="ECO:0007829" key="10">
    <source>
        <dbReference type="PDB" id="3G4N"/>
    </source>
</evidence>
<evidence type="ECO:0007829" key="11">
    <source>
        <dbReference type="PDB" id="3G4O"/>
    </source>
</evidence>
<keyword id="KW-0002">3D-structure</keyword>
<keyword id="KW-0903">Direct protein sequencing</keyword>
<keyword id="KW-1015">Disulfide bond</keyword>
<keyword id="KW-1032">Host cell membrane</keyword>
<keyword id="KW-1043">Host membrane</keyword>
<keyword id="KW-0472">Membrane</keyword>
<keyword id="KW-0964">Secreted</keyword>
<keyword id="KW-0732">Signal</keyword>
<keyword id="KW-0800">Toxin</keyword>
<keyword id="KW-0812">Transmembrane</keyword>
<keyword id="KW-1134">Transmembrane beta strand</keyword>
<keyword id="KW-0843">Virulence</keyword>
<comment type="function">
    <text evidence="1 3 4 5 6">Secreted, cytolytic toxin that forms pores in host membranes after proteolytic removal of a C-terminal propeptide, leading to destruction of the membrane permeability barrier and host cell death. The pores are formed by transmembrane beta-strands and are approximately 3 nm in diameter.</text>
</comment>
<comment type="subunit">
    <text evidence="1 3 5 6">Homodimer in solution; homoheptamer in the host membrane. After binding to GPI-anchored proteins in target membranes and proteolytic removal of the C-terminal propeptide, the protein assembles into a heptameric pre-pore complex. A further conformation change leads to insertion into the host membrane.</text>
</comment>
<comment type="interaction">
    <interactant intactId="EBI-8027669">
        <id>P09167</id>
    </interactant>
    <interactant intactId="EBI-8027669">
        <id>P09167</id>
        <label>aerA</label>
    </interactant>
    <organismsDiffer>false</organismsDiffer>
    <experiments>4</experiments>
</comment>
<comment type="subcellular location">
    <subcellularLocation>
        <location>Secreted</location>
    </subcellularLocation>
    <subcellularLocation>
        <location>Host cell membrane</location>
    </subcellularLocation>
    <text>Secreted as a soluble precursor.</text>
</comment>
<comment type="domain">
    <text evidence="4">The C-terminal propeptide is required for normal protein folding and secretion; it maintains the aerolysin precursor in its soluble form and prevents premature heptamerization and pore formation.</text>
</comment>
<comment type="PTM">
    <text>Proteolytic cleavage and subsequent release of the propeptide trigger a major conformation change, leading to the formation of a heptameric pre-pore that then inserts into the host membrane.</text>
</comment>
<comment type="similarity">
    <text evidence="7">Belongs to the aerolysin family.</text>
</comment>
<comment type="sequence caution" evidence="7">
    <conflict type="frameshift">
        <sequence resource="EMBL-CDS" id="AAA21938"/>
    </conflict>
</comment>
<organism>
    <name type="scientific">Aeromonas hydrophila</name>
    <dbReference type="NCBI Taxonomy" id="644"/>
    <lineage>
        <taxon>Bacteria</taxon>
        <taxon>Pseudomonadati</taxon>
        <taxon>Pseudomonadota</taxon>
        <taxon>Gammaproteobacteria</taxon>
        <taxon>Aeromonadales</taxon>
        <taxon>Aeromonadaceae</taxon>
        <taxon>Aeromonas</taxon>
    </lineage>
</organism>
<proteinExistence type="evidence at protein level"/>
<name>AERA_AERHY</name>
<protein>
    <recommendedName>
        <fullName>Aerolysin</fullName>
    </recommendedName>
</protein>